<organism>
    <name type="scientific">Salinibacter ruber (strain DSM 13855 / M31)</name>
    <dbReference type="NCBI Taxonomy" id="309807"/>
    <lineage>
        <taxon>Bacteria</taxon>
        <taxon>Pseudomonadati</taxon>
        <taxon>Rhodothermota</taxon>
        <taxon>Rhodothermia</taxon>
        <taxon>Rhodothermales</taxon>
        <taxon>Salinibacteraceae</taxon>
        <taxon>Salinibacter</taxon>
    </lineage>
</organism>
<name>NUSB_SALRD</name>
<reference key="1">
    <citation type="journal article" date="2005" name="Proc. Natl. Acad. Sci. U.S.A.">
        <title>The genome of Salinibacter ruber: convergence and gene exchange among hyperhalophilic bacteria and archaea.</title>
        <authorList>
            <person name="Mongodin E.F."/>
            <person name="Nelson K.E."/>
            <person name="Daugherty S."/>
            <person name="DeBoy R.T."/>
            <person name="Wister J."/>
            <person name="Khouri H."/>
            <person name="Weidman J."/>
            <person name="Walsh D.A."/>
            <person name="Papke R.T."/>
            <person name="Sanchez Perez G."/>
            <person name="Sharma A.K."/>
            <person name="Nesbo C.L."/>
            <person name="MacLeod D."/>
            <person name="Bapteste E."/>
            <person name="Doolittle W.F."/>
            <person name="Charlebois R.L."/>
            <person name="Legault B."/>
            <person name="Rodriguez-Valera F."/>
        </authorList>
    </citation>
    <scope>NUCLEOTIDE SEQUENCE [LARGE SCALE GENOMIC DNA]</scope>
    <source>
        <strain>DSM 13855 / CECT 5946 / M31</strain>
    </source>
</reference>
<accession>Q2S6K8</accession>
<feature type="chain" id="PRO_0000265585" description="Transcription antitermination protein NusB">
    <location>
        <begin position="1"/>
        <end position="160"/>
    </location>
</feature>
<comment type="function">
    <text evidence="1">Involved in transcription antitermination. Required for transcription of ribosomal RNA (rRNA) genes. Binds specifically to the boxA antiterminator sequence of the ribosomal RNA (rrn) operons.</text>
</comment>
<comment type="similarity">
    <text evidence="1">Belongs to the NusB family.</text>
</comment>
<dbReference type="EMBL" id="CP000159">
    <property type="protein sequence ID" value="ABC45567.1"/>
    <property type="molecule type" value="Genomic_DNA"/>
</dbReference>
<dbReference type="RefSeq" id="WP_011402806.1">
    <property type="nucleotide sequence ID" value="NC_007677.1"/>
</dbReference>
<dbReference type="RefSeq" id="YP_444173.1">
    <property type="nucleotide sequence ID" value="NC_007677.1"/>
</dbReference>
<dbReference type="SMR" id="Q2S6K8"/>
<dbReference type="STRING" id="309807.SRU_0015"/>
<dbReference type="EnsemblBacteria" id="ABC45567">
    <property type="protein sequence ID" value="ABC45567"/>
    <property type="gene ID" value="SRU_0015"/>
</dbReference>
<dbReference type="GeneID" id="83726846"/>
<dbReference type="KEGG" id="sru:SRU_0015"/>
<dbReference type="PATRIC" id="fig|309807.25.peg.15"/>
<dbReference type="eggNOG" id="COG0781">
    <property type="taxonomic scope" value="Bacteria"/>
</dbReference>
<dbReference type="HOGENOM" id="CLU_087843_3_0_10"/>
<dbReference type="OrthoDB" id="9787568at2"/>
<dbReference type="Proteomes" id="UP000008674">
    <property type="component" value="Chromosome"/>
</dbReference>
<dbReference type="GO" id="GO:0005829">
    <property type="term" value="C:cytosol"/>
    <property type="evidence" value="ECO:0007669"/>
    <property type="project" value="TreeGrafter"/>
</dbReference>
<dbReference type="GO" id="GO:0003723">
    <property type="term" value="F:RNA binding"/>
    <property type="evidence" value="ECO:0007669"/>
    <property type="project" value="UniProtKB-UniRule"/>
</dbReference>
<dbReference type="GO" id="GO:0006353">
    <property type="term" value="P:DNA-templated transcription termination"/>
    <property type="evidence" value="ECO:0007669"/>
    <property type="project" value="UniProtKB-UniRule"/>
</dbReference>
<dbReference type="GO" id="GO:0031564">
    <property type="term" value="P:transcription antitermination"/>
    <property type="evidence" value="ECO:0007669"/>
    <property type="project" value="UniProtKB-KW"/>
</dbReference>
<dbReference type="Gene3D" id="1.10.940.10">
    <property type="entry name" value="NusB-like"/>
    <property type="match status" value="1"/>
</dbReference>
<dbReference type="HAMAP" id="MF_00073">
    <property type="entry name" value="NusB"/>
    <property type="match status" value="1"/>
</dbReference>
<dbReference type="InterPro" id="IPR035926">
    <property type="entry name" value="NusB-like_sf"/>
</dbReference>
<dbReference type="InterPro" id="IPR011605">
    <property type="entry name" value="NusB_fam"/>
</dbReference>
<dbReference type="InterPro" id="IPR006027">
    <property type="entry name" value="NusB_RsmB_TIM44"/>
</dbReference>
<dbReference type="NCBIfam" id="TIGR01951">
    <property type="entry name" value="nusB"/>
    <property type="match status" value="1"/>
</dbReference>
<dbReference type="PANTHER" id="PTHR11078:SF3">
    <property type="entry name" value="ANTITERMINATION NUSB DOMAIN-CONTAINING PROTEIN"/>
    <property type="match status" value="1"/>
</dbReference>
<dbReference type="PANTHER" id="PTHR11078">
    <property type="entry name" value="N UTILIZATION SUBSTANCE PROTEIN B-RELATED"/>
    <property type="match status" value="1"/>
</dbReference>
<dbReference type="Pfam" id="PF01029">
    <property type="entry name" value="NusB"/>
    <property type="match status" value="1"/>
</dbReference>
<dbReference type="SUPFAM" id="SSF48013">
    <property type="entry name" value="NusB-like"/>
    <property type="match status" value="1"/>
</dbReference>
<gene>
    <name evidence="1" type="primary">nusB</name>
    <name type="ordered locus">SRU_0015</name>
</gene>
<proteinExistence type="inferred from homology"/>
<sequence length="160" mass="18087">MSSRRDAREQVMKTLYANEQTDGDAEQALHALVRVPLDEDPSTRDFAEHLFRETLKTMEEADEIIEKHADNWEIHRIAAIDRSLLRMATTELLKFEEVPPKVSVDEAIEIAKRYSTPRSGTFVNGVIDAILLDLHDQGRLNKTGRGLIGMDTIQERAGSS</sequence>
<keyword id="KW-1185">Reference proteome</keyword>
<keyword id="KW-0694">RNA-binding</keyword>
<keyword id="KW-0804">Transcription</keyword>
<keyword id="KW-0889">Transcription antitermination</keyword>
<keyword id="KW-0805">Transcription regulation</keyword>
<protein>
    <recommendedName>
        <fullName evidence="1">Transcription antitermination protein NusB</fullName>
    </recommendedName>
    <alternativeName>
        <fullName evidence="1">Antitermination factor NusB</fullName>
    </alternativeName>
</protein>
<evidence type="ECO:0000255" key="1">
    <source>
        <dbReference type="HAMAP-Rule" id="MF_00073"/>
    </source>
</evidence>